<reference evidence="4" key="1">
    <citation type="journal article" date="2009" name="BMC Evol. Biol.">
        <title>A proteomic approach for studying insect phylogeny: CAPA peptides of ancient insect taxa (Dictyoptera, Blattoptera) as a test case.</title>
        <authorList>
            <person name="Roth S."/>
            <person name="Fromm B."/>
            <person name="Gaede G."/>
            <person name="Predel R."/>
        </authorList>
    </citation>
    <scope>PROTEIN SEQUENCE</scope>
    <scope>AMIDATION AT THR-11</scope>
    <source>
        <tissue evidence="2">Abdominal perisympathetic organs</tissue>
    </source>
</reference>
<name>PVK1_DIPPU</name>
<keyword id="KW-0027">Amidation</keyword>
<keyword id="KW-0903">Direct protein sequencing</keyword>
<keyword id="KW-0527">Neuropeptide</keyword>
<keyword id="KW-0964">Secreted</keyword>
<organism>
    <name type="scientific">Diploptera punctata</name>
    <name type="common">Pacific beetle cockroach</name>
    <dbReference type="NCBI Taxonomy" id="6984"/>
    <lineage>
        <taxon>Eukaryota</taxon>
        <taxon>Metazoa</taxon>
        <taxon>Ecdysozoa</taxon>
        <taxon>Arthropoda</taxon>
        <taxon>Hexapoda</taxon>
        <taxon>Insecta</taxon>
        <taxon>Pterygota</taxon>
        <taxon>Neoptera</taxon>
        <taxon>Polyneoptera</taxon>
        <taxon>Dictyoptera</taxon>
        <taxon>Blattodea</taxon>
        <taxon>Blaberoidea</taxon>
        <taxon>Blaberidae</taxon>
        <taxon>Diplopterinae</taxon>
        <taxon>Diploptera</taxon>
    </lineage>
</organism>
<sequence length="11" mass="1091">GSSGLIPFGRT</sequence>
<protein>
    <recommendedName>
        <fullName evidence="3">Periviscerokinin-1</fullName>
        <shortName evidence="3">DipPu-PVK-1</shortName>
    </recommendedName>
</protein>
<comment type="function">
    <text evidence="4">Mediates visceral muscle contractile activity (myotropic activity).</text>
</comment>
<comment type="subcellular location">
    <subcellularLocation>
        <location evidence="4">Secreted</location>
    </subcellularLocation>
</comment>
<comment type="similarity">
    <text evidence="1">Belongs to the periviscerokinin family.</text>
</comment>
<proteinExistence type="evidence at protein level"/>
<evidence type="ECO:0000255" key="1"/>
<evidence type="ECO:0000269" key="2">
    <source>
    </source>
</evidence>
<evidence type="ECO:0000303" key="3">
    <source>
    </source>
</evidence>
<evidence type="ECO:0000305" key="4"/>
<accession>P85599</accession>
<feature type="peptide" id="PRO_0000378737" description="Periviscerokinin-1" evidence="2">
    <location>
        <begin position="1"/>
        <end position="11"/>
    </location>
</feature>
<feature type="modified residue" description="Threonine amide" evidence="2">
    <location>
        <position position="11"/>
    </location>
</feature>
<dbReference type="GO" id="GO:0005576">
    <property type="term" value="C:extracellular region"/>
    <property type="evidence" value="ECO:0007669"/>
    <property type="project" value="UniProtKB-SubCell"/>
</dbReference>
<dbReference type="GO" id="GO:0007218">
    <property type="term" value="P:neuropeptide signaling pathway"/>
    <property type="evidence" value="ECO:0007669"/>
    <property type="project" value="UniProtKB-KW"/>
</dbReference>
<dbReference type="InterPro" id="IPR013231">
    <property type="entry name" value="Periviscerokinin"/>
</dbReference>
<dbReference type="Pfam" id="PF08259">
    <property type="entry name" value="Periviscerokin"/>
    <property type="match status" value="1"/>
</dbReference>